<keyword id="KW-0975">Bacterial flagellum</keyword>
<keyword id="KW-0574">Periplasm</keyword>
<keyword id="KW-0732">Signal</keyword>
<organism>
    <name type="scientific">Helicobacter acinonychis (strain Sheeba)</name>
    <dbReference type="NCBI Taxonomy" id="382638"/>
    <lineage>
        <taxon>Bacteria</taxon>
        <taxon>Pseudomonadati</taxon>
        <taxon>Campylobacterota</taxon>
        <taxon>Epsilonproteobacteria</taxon>
        <taxon>Campylobacterales</taxon>
        <taxon>Helicobacteraceae</taxon>
        <taxon>Helicobacter</taxon>
    </lineage>
</organism>
<dbReference type="EMBL" id="AM260522">
    <property type="protein sequence ID" value="CAK00106.1"/>
    <property type="molecule type" value="Genomic_DNA"/>
</dbReference>
<dbReference type="RefSeq" id="WP_011578196.1">
    <property type="nucleotide sequence ID" value="NC_008229.1"/>
</dbReference>
<dbReference type="SMR" id="Q17W70"/>
<dbReference type="STRING" id="382638.Hac_1371"/>
<dbReference type="GeneID" id="31758677"/>
<dbReference type="KEGG" id="hac:Hac_1371"/>
<dbReference type="eggNOG" id="COG1706">
    <property type="taxonomic scope" value="Bacteria"/>
</dbReference>
<dbReference type="HOGENOM" id="CLU_045235_1_0_7"/>
<dbReference type="OrthoDB" id="9786431at2"/>
<dbReference type="BioCyc" id="HACI382638:HAC_RS05860-MONOMER"/>
<dbReference type="Proteomes" id="UP000000775">
    <property type="component" value="Chromosome"/>
</dbReference>
<dbReference type="GO" id="GO:0009428">
    <property type="term" value="C:bacterial-type flagellum basal body, distal rod, P ring"/>
    <property type="evidence" value="ECO:0007669"/>
    <property type="project" value="InterPro"/>
</dbReference>
<dbReference type="GO" id="GO:0030288">
    <property type="term" value="C:outer membrane-bounded periplasmic space"/>
    <property type="evidence" value="ECO:0007669"/>
    <property type="project" value="InterPro"/>
</dbReference>
<dbReference type="GO" id="GO:0005198">
    <property type="term" value="F:structural molecule activity"/>
    <property type="evidence" value="ECO:0007669"/>
    <property type="project" value="InterPro"/>
</dbReference>
<dbReference type="GO" id="GO:0071973">
    <property type="term" value="P:bacterial-type flagellum-dependent cell motility"/>
    <property type="evidence" value="ECO:0007669"/>
    <property type="project" value="InterPro"/>
</dbReference>
<dbReference type="HAMAP" id="MF_00416">
    <property type="entry name" value="FlgI"/>
    <property type="match status" value="1"/>
</dbReference>
<dbReference type="InterPro" id="IPR001782">
    <property type="entry name" value="Flag_FlgI"/>
</dbReference>
<dbReference type="NCBIfam" id="NF003676">
    <property type="entry name" value="PRK05303.1"/>
    <property type="match status" value="1"/>
</dbReference>
<dbReference type="PANTHER" id="PTHR30381">
    <property type="entry name" value="FLAGELLAR P-RING PERIPLASMIC PROTEIN FLGI"/>
    <property type="match status" value="1"/>
</dbReference>
<dbReference type="PANTHER" id="PTHR30381:SF0">
    <property type="entry name" value="FLAGELLAR P-RING PROTEIN"/>
    <property type="match status" value="1"/>
</dbReference>
<dbReference type="Pfam" id="PF02119">
    <property type="entry name" value="FlgI"/>
    <property type="match status" value="1"/>
</dbReference>
<dbReference type="PRINTS" id="PR01010">
    <property type="entry name" value="FLGPRINGFLGI"/>
</dbReference>
<evidence type="ECO:0000255" key="1">
    <source>
        <dbReference type="HAMAP-Rule" id="MF_00416"/>
    </source>
</evidence>
<reference key="1">
    <citation type="journal article" date="2006" name="PLoS Genet.">
        <title>Who ate whom? Adaptive Helicobacter genomic changes that accompanied a host jump from early humans to large felines.</title>
        <authorList>
            <person name="Eppinger M."/>
            <person name="Baar C."/>
            <person name="Linz B."/>
            <person name="Raddatz G."/>
            <person name="Lanz C."/>
            <person name="Keller H."/>
            <person name="Morelli G."/>
            <person name="Gressmann H."/>
            <person name="Achtman M."/>
            <person name="Schuster S.C."/>
        </authorList>
    </citation>
    <scope>NUCLEOTIDE SEQUENCE [LARGE SCALE GENOMIC DNA]</scope>
    <source>
        <strain>Sheeba</strain>
    </source>
</reference>
<name>FLGI_HELAH</name>
<accession>Q17W70</accession>
<proteinExistence type="inferred from homology"/>
<sequence>MKQVFLWLIFVLAFHKLLAEKIGDIASVVGVRDNQLIGYGLVIGLNGTGDKSGSKFTMQSISNMLESVNVKISADDIKSKNVAAVMITASLPPFARQGDKIDIHISSIGDAKSIQGGTLVMTPLNAVDGNIYALAQGSITSGNSNNLLSANIINGATIEREVSYDLFHKNAMVLSLKNPNFKNAIQVQNALNKVFNKRIAMALDPKTIQITRPERFSMVEFLAIVQEIPINYSAKNKIIVDEKSGTIVSGVDIIVHPIVVTSQDITLKITKEPLNDSKNVQDLDSMSLDTAHNTLSSNGKNITIAGVMKALQKIGVSAKGIVSILQALKKSGAISAEMEIL</sequence>
<comment type="function">
    <text evidence="1">Assembles around the rod to form the L-ring and probably protects the motor/basal body from shearing forces during rotation.</text>
</comment>
<comment type="subunit">
    <text evidence="1">The basal body constitutes a major portion of the flagellar organelle and consists of four rings (L,P,S, and M) mounted on a central rod.</text>
</comment>
<comment type="subcellular location">
    <subcellularLocation>
        <location evidence="1">Periplasm</location>
    </subcellularLocation>
    <subcellularLocation>
        <location evidence="1">Bacterial flagellum basal body</location>
    </subcellularLocation>
</comment>
<comment type="similarity">
    <text evidence="1">Belongs to the FlgI family.</text>
</comment>
<protein>
    <recommendedName>
        <fullName evidence="1">Flagellar P-ring protein</fullName>
    </recommendedName>
    <alternativeName>
        <fullName evidence="1">Basal body P-ring protein</fullName>
    </alternativeName>
</protein>
<gene>
    <name evidence="1" type="primary">flgI</name>
    <name type="ordered locus">Hac_1371</name>
</gene>
<feature type="signal peptide" evidence="1">
    <location>
        <begin position="1"/>
        <end position="19"/>
    </location>
</feature>
<feature type="chain" id="PRO_1000050112" description="Flagellar P-ring protein">
    <location>
        <begin position="20"/>
        <end position="341"/>
    </location>
</feature>